<gene>
    <name type="primary">EXL1</name>
    <name type="synonym">PHI-1</name>
    <name type="ordered locus">At1g35140</name>
    <name type="ORF">T32G9.32</name>
</gene>
<name>EXOL1_ARATH</name>
<accession>Q9C6E4</accession>
<accession>Q9FPI9</accession>
<evidence type="ECO:0000255" key="1"/>
<evidence type="ECO:0000269" key="2">
    <source>
    </source>
</evidence>
<evidence type="ECO:0000269" key="3">
    <source>
    </source>
</evidence>
<evidence type="ECO:0000305" key="4"/>
<protein>
    <recommendedName>
        <fullName>Protein EXORDIUM-like 1</fullName>
    </recommendedName>
    <alternativeName>
        <fullName>PHOSPHATE-INDUCED 1</fullName>
    </alternativeName>
</protein>
<proteinExistence type="evidence at transcript level"/>
<organism>
    <name type="scientific">Arabidopsis thaliana</name>
    <name type="common">Mouse-ear cress</name>
    <dbReference type="NCBI Taxonomy" id="3702"/>
    <lineage>
        <taxon>Eukaryota</taxon>
        <taxon>Viridiplantae</taxon>
        <taxon>Streptophyta</taxon>
        <taxon>Embryophyta</taxon>
        <taxon>Tracheophyta</taxon>
        <taxon>Spermatophyta</taxon>
        <taxon>Magnoliopsida</taxon>
        <taxon>eudicotyledons</taxon>
        <taxon>Gunneridae</taxon>
        <taxon>Pentapetalae</taxon>
        <taxon>rosids</taxon>
        <taxon>malvids</taxon>
        <taxon>Brassicales</taxon>
        <taxon>Brassicaceae</taxon>
        <taxon>Camelineae</taxon>
        <taxon>Arabidopsis</taxon>
    </lineage>
</organism>
<keyword id="KW-0052">Apoplast</keyword>
<keyword id="KW-1185">Reference proteome</keyword>
<keyword id="KW-0964">Secreted</keyword>
<keyword id="KW-0732">Signal</keyword>
<sequence length="309" mass="33186">MASFVMGYFLLFAVAFMCLDARTDKTQDYTSFQYHKGALLTGDVSINLIWYGKFKPSQRAIVTDFVASLSSSRRSTMAQNPSVATWWKTVEKYYQFRKMTTTRGLSLSLGEQILDQGYSMGKSLTEKNLKDLAAKGGQSYAVNVVLTSADVTVQGFCMNRCGSHGTGSGSGKKGSRFAYIWVGNSETQCPGQCAWPFHAPVYGPQSPPLVAPNNDVGLDGMVINLASLMAATATNPFGDGYYQGPKTAPLEAGSACTGVYGKGSYPGYAGELLVDATTGGSYNVKGLNGRKYLLPALFDPKTDSCSTLF</sequence>
<feature type="signal peptide" evidence="1">
    <location>
        <begin position="1"/>
        <end position="23"/>
    </location>
</feature>
<feature type="chain" id="PRO_0000430281" description="Protein EXORDIUM-like 1">
    <location>
        <begin position="24"/>
        <end position="309"/>
    </location>
</feature>
<comment type="function">
    <text evidence="3">May play a role in a brassinosteroid-dependent regulatory pathway that controls growth and development under low carbon and energy availability.</text>
</comment>
<comment type="subcellular location">
    <subcellularLocation>
        <location>Secreted</location>
    </subcellularLocation>
    <subcellularLocation>
        <location>Secreted</location>
        <location>Extracellular space</location>
    </subcellularLocation>
    <subcellularLocation>
        <location evidence="4">Secreted</location>
        <location evidence="4">Extracellular space</location>
        <location evidence="4">Apoplast</location>
    </subcellularLocation>
</comment>
<comment type="induction">
    <text evidence="2">By brassinolide.</text>
</comment>
<comment type="disruption phenotype">
    <text evidence="3">No visible phenotype under normal growth conditions, but mutant plants show diminished biomass production under low carbon and energy conditions.</text>
</comment>
<comment type="similarity">
    <text evidence="4">Belongs to the EXORDIUM family.</text>
</comment>
<comment type="sequence caution" evidence="4">
    <conflict type="frameshift">
        <sequence resource="EMBL-CDS" id="AAG40350"/>
    </conflict>
</comment>
<dbReference type="EMBL" id="AC079605">
    <property type="protein sequence ID" value="AAG50598.1"/>
    <property type="molecule type" value="Genomic_DNA"/>
</dbReference>
<dbReference type="EMBL" id="CP002684">
    <property type="protein sequence ID" value="AEE31758.1"/>
    <property type="molecule type" value="Genomic_DNA"/>
</dbReference>
<dbReference type="EMBL" id="AF324998">
    <property type="protein sequence ID" value="AAG40350.1"/>
    <property type="status" value="ALT_FRAME"/>
    <property type="molecule type" value="mRNA"/>
</dbReference>
<dbReference type="EMBL" id="AY084831">
    <property type="protein sequence ID" value="AAM61396.1"/>
    <property type="molecule type" value="mRNA"/>
</dbReference>
<dbReference type="PIR" id="H86471">
    <property type="entry name" value="H86471"/>
</dbReference>
<dbReference type="RefSeq" id="NP_174746.1">
    <property type="nucleotide sequence ID" value="NM_103210.4"/>
</dbReference>
<dbReference type="STRING" id="3702.Q9C6E4"/>
<dbReference type="PaxDb" id="3702-AT1G35140.1"/>
<dbReference type="ProteomicsDB" id="221814"/>
<dbReference type="EnsemblPlants" id="AT1G35140.1">
    <property type="protein sequence ID" value="AT1G35140.1"/>
    <property type="gene ID" value="AT1G35140"/>
</dbReference>
<dbReference type="GeneID" id="840399"/>
<dbReference type="Gramene" id="AT1G35140.1">
    <property type="protein sequence ID" value="AT1G35140.1"/>
    <property type="gene ID" value="AT1G35140"/>
</dbReference>
<dbReference type="KEGG" id="ath:AT1G35140"/>
<dbReference type="Araport" id="AT1G35140"/>
<dbReference type="TAIR" id="AT1G35140">
    <property type="gene designation" value="PHI-1"/>
</dbReference>
<dbReference type="eggNOG" id="KOG0017">
    <property type="taxonomic scope" value="Eukaryota"/>
</dbReference>
<dbReference type="HOGENOM" id="CLU_053777_1_0_1"/>
<dbReference type="InParanoid" id="Q9C6E4"/>
<dbReference type="OMA" id="FASFAHE"/>
<dbReference type="PhylomeDB" id="Q9C6E4"/>
<dbReference type="CD-CODE" id="4299E36E">
    <property type="entry name" value="Nucleolus"/>
</dbReference>
<dbReference type="PRO" id="PR:Q9C6E4"/>
<dbReference type="Proteomes" id="UP000006548">
    <property type="component" value="Chromosome 1"/>
</dbReference>
<dbReference type="ExpressionAtlas" id="Q9C6E4">
    <property type="expression patterns" value="baseline and differential"/>
</dbReference>
<dbReference type="GO" id="GO:0048046">
    <property type="term" value="C:apoplast"/>
    <property type="evidence" value="ECO:0007669"/>
    <property type="project" value="UniProtKB-SubCell"/>
</dbReference>
<dbReference type="GO" id="GO:0005794">
    <property type="term" value="C:Golgi apparatus"/>
    <property type="evidence" value="ECO:0007005"/>
    <property type="project" value="TAIR"/>
</dbReference>
<dbReference type="GO" id="GO:0009505">
    <property type="term" value="C:plant-type cell wall"/>
    <property type="evidence" value="ECO:0007005"/>
    <property type="project" value="TAIR"/>
</dbReference>
<dbReference type="GO" id="GO:0071456">
    <property type="term" value="P:cellular response to hypoxia"/>
    <property type="evidence" value="ECO:0007007"/>
    <property type="project" value="TAIR"/>
</dbReference>
<dbReference type="GO" id="GO:0001666">
    <property type="term" value="P:response to hypoxia"/>
    <property type="evidence" value="ECO:0000270"/>
    <property type="project" value="TAIR"/>
</dbReference>
<dbReference type="InterPro" id="IPR006766">
    <property type="entry name" value="EXORDIUM-like"/>
</dbReference>
<dbReference type="PANTHER" id="PTHR31279">
    <property type="entry name" value="PROTEIN EXORDIUM-LIKE 5"/>
    <property type="match status" value="1"/>
</dbReference>
<dbReference type="PANTHER" id="PTHR31279:SF54">
    <property type="entry name" value="PROTEIN EXORDIUM-RELATED"/>
    <property type="match status" value="1"/>
</dbReference>
<dbReference type="Pfam" id="PF04674">
    <property type="entry name" value="Phi_1"/>
    <property type="match status" value="1"/>
</dbReference>
<reference key="1">
    <citation type="journal article" date="2000" name="Nature">
        <title>Sequence and analysis of chromosome 1 of the plant Arabidopsis thaliana.</title>
        <authorList>
            <person name="Theologis A."/>
            <person name="Ecker J.R."/>
            <person name="Palm C.J."/>
            <person name="Federspiel N.A."/>
            <person name="Kaul S."/>
            <person name="White O."/>
            <person name="Alonso J."/>
            <person name="Altafi H."/>
            <person name="Araujo R."/>
            <person name="Bowman C.L."/>
            <person name="Brooks S.Y."/>
            <person name="Buehler E."/>
            <person name="Chan A."/>
            <person name="Chao Q."/>
            <person name="Chen H."/>
            <person name="Cheuk R.F."/>
            <person name="Chin C.W."/>
            <person name="Chung M.K."/>
            <person name="Conn L."/>
            <person name="Conway A.B."/>
            <person name="Conway A.R."/>
            <person name="Creasy T.H."/>
            <person name="Dewar K."/>
            <person name="Dunn P."/>
            <person name="Etgu P."/>
            <person name="Feldblyum T.V."/>
            <person name="Feng J.-D."/>
            <person name="Fong B."/>
            <person name="Fujii C.Y."/>
            <person name="Gill J.E."/>
            <person name="Goldsmith A.D."/>
            <person name="Haas B."/>
            <person name="Hansen N.F."/>
            <person name="Hughes B."/>
            <person name="Huizar L."/>
            <person name="Hunter J.L."/>
            <person name="Jenkins J."/>
            <person name="Johnson-Hopson C."/>
            <person name="Khan S."/>
            <person name="Khaykin E."/>
            <person name="Kim C.J."/>
            <person name="Koo H.L."/>
            <person name="Kremenetskaia I."/>
            <person name="Kurtz D.B."/>
            <person name="Kwan A."/>
            <person name="Lam B."/>
            <person name="Langin-Hooper S."/>
            <person name="Lee A."/>
            <person name="Lee J.M."/>
            <person name="Lenz C.A."/>
            <person name="Li J.H."/>
            <person name="Li Y.-P."/>
            <person name="Lin X."/>
            <person name="Liu S.X."/>
            <person name="Liu Z.A."/>
            <person name="Luros J.S."/>
            <person name="Maiti R."/>
            <person name="Marziali A."/>
            <person name="Militscher J."/>
            <person name="Miranda M."/>
            <person name="Nguyen M."/>
            <person name="Nierman W.C."/>
            <person name="Osborne B.I."/>
            <person name="Pai G."/>
            <person name="Peterson J."/>
            <person name="Pham P.K."/>
            <person name="Rizzo M."/>
            <person name="Rooney T."/>
            <person name="Rowley D."/>
            <person name="Sakano H."/>
            <person name="Salzberg S.L."/>
            <person name="Schwartz J.R."/>
            <person name="Shinn P."/>
            <person name="Southwick A.M."/>
            <person name="Sun H."/>
            <person name="Tallon L.J."/>
            <person name="Tambunga G."/>
            <person name="Toriumi M.J."/>
            <person name="Town C.D."/>
            <person name="Utterback T."/>
            <person name="Van Aken S."/>
            <person name="Vaysberg M."/>
            <person name="Vysotskaia V.S."/>
            <person name="Walker M."/>
            <person name="Wu D."/>
            <person name="Yu G."/>
            <person name="Fraser C.M."/>
            <person name="Venter J.C."/>
            <person name="Davis R.W."/>
        </authorList>
    </citation>
    <scope>NUCLEOTIDE SEQUENCE [LARGE SCALE GENOMIC DNA]</scope>
    <source>
        <strain>cv. Columbia</strain>
    </source>
</reference>
<reference key="2">
    <citation type="journal article" date="2017" name="Plant J.">
        <title>Araport11: a complete reannotation of the Arabidopsis thaliana reference genome.</title>
        <authorList>
            <person name="Cheng C.Y."/>
            <person name="Krishnakumar V."/>
            <person name="Chan A.P."/>
            <person name="Thibaud-Nissen F."/>
            <person name="Schobel S."/>
            <person name="Town C.D."/>
        </authorList>
    </citation>
    <scope>GENOME REANNOTATION</scope>
    <source>
        <strain>cv. Columbia</strain>
    </source>
</reference>
<reference key="3">
    <citation type="journal article" date="2003" name="Science">
        <title>Empirical analysis of transcriptional activity in the Arabidopsis genome.</title>
        <authorList>
            <person name="Yamada K."/>
            <person name="Lim J."/>
            <person name="Dale J.M."/>
            <person name="Chen H."/>
            <person name="Shinn P."/>
            <person name="Palm C.J."/>
            <person name="Southwick A.M."/>
            <person name="Wu H.C."/>
            <person name="Kim C.J."/>
            <person name="Nguyen M."/>
            <person name="Pham P.K."/>
            <person name="Cheuk R.F."/>
            <person name="Karlin-Newmann G."/>
            <person name="Liu S.X."/>
            <person name="Lam B."/>
            <person name="Sakano H."/>
            <person name="Wu T."/>
            <person name="Yu G."/>
            <person name="Miranda M."/>
            <person name="Quach H.L."/>
            <person name="Tripp M."/>
            <person name="Chang C.H."/>
            <person name="Lee J.M."/>
            <person name="Toriumi M.J."/>
            <person name="Chan M.M."/>
            <person name="Tang C.C."/>
            <person name="Onodera C.S."/>
            <person name="Deng J.M."/>
            <person name="Akiyama K."/>
            <person name="Ansari Y."/>
            <person name="Arakawa T."/>
            <person name="Banh J."/>
            <person name="Banno F."/>
            <person name="Bowser L."/>
            <person name="Brooks S.Y."/>
            <person name="Carninci P."/>
            <person name="Chao Q."/>
            <person name="Choy N."/>
            <person name="Enju A."/>
            <person name="Goldsmith A.D."/>
            <person name="Gurjal M."/>
            <person name="Hansen N.F."/>
            <person name="Hayashizaki Y."/>
            <person name="Johnson-Hopson C."/>
            <person name="Hsuan V.W."/>
            <person name="Iida K."/>
            <person name="Karnes M."/>
            <person name="Khan S."/>
            <person name="Koesema E."/>
            <person name="Ishida J."/>
            <person name="Jiang P.X."/>
            <person name="Jones T."/>
            <person name="Kawai J."/>
            <person name="Kamiya A."/>
            <person name="Meyers C."/>
            <person name="Nakajima M."/>
            <person name="Narusaka M."/>
            <person name="Seki M."/>
            <person name="Sakurai T."/>
            <person name="Satou M."/>
            <person name="Tamse R."/>
            <person name="Vaysberg M."/>
            <person name="Wallender E.K."/>
            <person name="Wong C."/>
            <person name="Yamamura Y."/>
            <person name="Yuan S."/>
            <person name="Shinozaki K."/>
            <person name="Davis R.W."/>
            <person name="Theologis A."/>
            <person name="Ecker J.R."/>
        </authorList>
    </citation>
    <scope>NUCLEOTIDE SEQUENCE [LARGE SCALE MRNA]</scope>
    <source>
        <strain>cv. Columbia</strain>
    </source>
</reference>
<reference key="4">
    <citation type="submission" date="2002-03" db="EMBL/GenBank/DDBJ databases">
        <title>Full-length cDNA from Arabidopsis thaliana.</title>
        <authorList>
            <person name="Brover V.V."/>
            <person name="Troukhan M.E."/>
            <person name="Alexandrov N.A."/>
            <person name="Lu Y.-P."/>
            <person name="Flavell R.B."/>
            <person name="Feldmann K.A."/>
        </authorList>
    </citation>
    <scope>NUCLEOTIDE SEQUENCE [LARGE SCALE MRNA]</scope>
</reference>
<reference key="5">
    <citation type="journal article" date="2009" name="BMC Plant Biol.">
        <title>The extracellular EXO protein mediates cell expansion in Arabidopsis leaves.</title>
        <authorList>
            <person name="Schroder F."/>
            <person name="Lisso J."/>
            <person name="Lange P."/>
            <person name="Mussig C."/>
        </authorList>
    </citation>
    <scope>INDUCTION BY BRASSINOLIDE</scope>
    <scope>GENE FAMILY</scope>
    <scope>NOMENCLATURE</scope>
</reference>
<reference key="6">
    <citation type="journal article" date="2011" name="Plant Physiol.">
        <title>EXORDIUM-LIKE1 promotes growth during low carbon availability in Arabidopsis.</title>
        <authorList>
            <person name="Schroder F."/>
            <person name="Lisso J."/>
            <person name="Mussig C."/>
        </authorList>
    </citation>
    <scope>FUNCTION</scope>
    <scope>DISRUPTION PHENOTYPE</scope>
</reference>